<organism>
    <name type="scientific">Nitrosopumilus maritimus (strain SCM1)</name>
    <dbReference type="NCBI Taxonomy" id="436308"/>
    <lineage>
        <taxon>Archaea</taxon>
        <taxon>Nitrososphaerota</taxon>
        <taxon>Nitrososphaeria</taxon>
        <taxon>Nitrosopumilales</taxon>
        <taxon>Nitrosopumilaceae</taxon>
        <taxon>Nitrosopumilus</taxon>
    </lineage>
</organism>
<evidence type="ECO:0000255" key="1">
    <source>
        <dbReference type="HAMAP-Rule" id="MF_00494"/>
    </source>
</evidence>
<name>TAL_NITMS</name>
<protein>
    <recommendedName>
        <fullName evidence="1">Probable transaldolase</fullName>
        <ecNumber evidence="1">2.2.1.2</ecNumber>
    </recommendedName>
</protein>
<sequence>MKIFLDTANLESIKKFNDMGLLDGITTNPSLMSKEKGNPKDAMEEITKIIKGDVSLEVVSTDFSGMVDEGKRLRQYGDNVVVKVPMTPDGLKACKSLSSEGIPVNVTLVFSPNQALLAAKSGAKYVSPFIGRLDDIGQDGMNLIQDIKDIFKNYPHLKTEILVASVRHPMHVVEAAKIGADVVTLPPGVLDKMLQHPLTKIGLENFLKDWEKVKAENPDIKI</sequence>
<accession>A9A413</accession>
<proteinExistence type="inferred from homology"/>
<feature type="chain" id="PRO_1000126333" description="Probable transaldolase">
    <location>
        <begin position="1"/>
        <end position="222"/>
    </location>
</feature>
<feature type="active site" description="Schiff-base intermediate with substrate" evidence="1">
    <location>
        <position position="83"/>
    </location>
</feature>
<comment type="function">
    <text evidence="1">Transaldolase is important for the balance of metabolites in the pentose-phosphate pathway.</text>
</comment>
<comment type="catalytic activity">
    <reaction evidence="1">
        <text>D-sedoheptulose 7-phosphate + D-glyceraldehyde 3-phosphate = D-erythrose 4-phosphate + beta-D-fructose 6-phosphate</text>
        <dbReference type="Rhea" id="RHEA:17053"/>
        <dbReference type="ChEBI" id="CHEBI:16897"/>
        <dbReference type="ChEBI" id="CHEBI:57483"/>
        <dbReference type="ChEBI" id="CHEBI:57634"/>
        <dbReference type="ChEBI" id="CHEBI:59776"/>
        <dbReference type="EC" id="2.2.1.2"/>
    </reaction>
</comment>
<comment type="pathway">
    <text evidence="1">Carbohydrate degradation; pentose phosphate pathway; D-glyceraldehyde 3-phosphate and beta-D-fructose 6-phosphate from D-ribose 5-phosphate and D-xylulose 5-phosphate (non-oxidative stage): step 2/3.</text>
</comment>
<comment type="subcellular location">
    <subcellularLocation>
        <location evidence="1">Cytoplasm</location>
    </subcellularLocation>
</comment>
<comment type="similarity">
    <text evidence="1">Belongs to the transaldolase family. Type 3B subfamily.</text>
</comment>
<gene>
    <name evidence="1" type="primary">tal</name>
    <name type="ordered locus">Nmar_0301</name>
</gene>
<keyword id="KW-0963">Cytoplasm</keyword>
<keyword id="KW-0570">Pentose shunt</keyword>
<keyword id="KW-1185">Reference proteome</keyword>
<keyword id="KW-0704">Schiff base</keyword>
<keyword id="KW-0808">Transferase</keyword>
<dbReference type="EC" id="2.2.1.2" evidence="1"/>
<dbReference type="EMBL" id="CP000866">
    <property type="protein sequence ID" value="ABX12197.1"/>
    <property type="molecule type" value="Genomic_DNA"/>
</dbReference>
<dbReference type="RefSeq" id="WP_012214684.1">
    <property type="nucleotide sequence ID" value="NC_010085.1"/>
</dbReference>
<dbReference type="SMR" id="A9A413"/>
<dbReference type="STRING" id="436308.Nmar_0301"/>
<dbReference type="EnsemblBacteria" id="ABX12197">
    <property type="protein sequence ID" value="ABX12197"/>
    <property type="gene ID" value="Nmar_0301"/>
</dbReference>
<dbReference type="GeneID" id="5773837"/>
<dbReference type="KEGG" id="nmr:Nmar_0301"/>
<dbReference type="eggNOG" id="arCOG05061">
    <property type="taxonomic scope" value="Archaea"/>
</dbReference>
<dbReference type="HOGENOM" id="CLU_079764_0_0_2"/>
<dbReference type="InParanoid" id="A9A413"/>
<dbReference type="OrthoDB" id="6661at2157"/>
<dbReference type="PhylomeDB" id="A9A413"/>
<dbReference type="UniPathway" id="UPA00115">
    <property type="reaction ID" value="UER00414"/>
</dbReference>
<dbReference type="Proteomes" id="UP000000792">
    <property type="component" value="Chromosome"/>
</dbReference>
<dbReference type="GO" id="GO:0005737">
    <property type="term" value="C:cytoplasm"/>
    <property type="evidence" value="ECO:0007669"/>
    <property type="project" value="UniProtKB-SubCell"/>
</dbReference>
<dbReference type="GO" id="GO:0016832">
    <property type="term" value="F:aldehyde-lyase activity"/>
    <property type="evidence" value="ECO:0007669"/>
    <property type="project" value="InterPro"/>
</dbReference>
<dbReference type="GO" id="GO:0004801">
    <property type="term" value="F:transaldolase activity"/>
    <property type="evidence" value="ECO:0007669"/>
    <property type="project" value="UniProtKB-UniRule"/>
</dbReference>
<dbReference type="GO" id="GO:0005975">
    <property type="term" value="P:carbohydrate metabolic process"/>
    <property type="evidence" value="ECO:0007669"/>
    <property type="project" value="InterPro"/>
</dbReference>
<dbReference type="GO" id="GO:0006098">
    <property type="term" value="P:pentose-phosphate shunt"/>
    <property type="evidence" value="ECO:0007669"/>
    <property type="project" value="UniProtKB-UniRule"/>
</dbReference>
<dbReference type="CDD" id="cd00956">
    <property type="entry name" value="Transaldolase_FSA"/>
    <property type="match status" value="1"/>
</dbReference>
<dbReference type="FunFam" id="3.20.20.70:FF:000018">
    <property type="entry name" value="Probable transaldolase"/>
    <property type="match status" value="1"/>
</dbReference>
<dbReference type="Gene3D" id="3.20.20.70">
    <property type="entry name" value="Aldolase class I"/>
    <property type="match status" value="1"/>
</dbReference>
<dbReference type="HAMAP" id="MF_00494">
    <property type="entry name" value="Transaldolase_3b"/>
    <property type="match status" value="1"/>
</dbReference>
<dbReference type="InterPro" id="IPR013785">
    <property type="entry name" value="Aldolase_TIM"/>
</dbReference>
<dbReference type="InterPro" id="IPR001585">
    <property type="entry name" value="TAL/FSA"/>
</dbReference>
<dbReference type="InterPro" id="IPR022999">
    <property type="entry name" value="Transaldolase_3B"/>
</dbReference>
<dbReference type="InterPro" id="IPR004731">
    <property type="entry name" value="Transaldolase_3B/F6P_aldolase"/>
</dbReference>
<dbReference type="InterPro" id="IPR018225">
    <property type="entry name" value="Transaldolase_AS"/>
</dbReference>
<dbReference type="InterPro" id="IPR033919">
    <property type="entry name" value="TSA/FSA_arc/bac"/>
</dbReference>
<dbReference type="NCBIfam" id="TIGR00875">
    <property type="entry name" value="fsa_talC_mipB"/>
    <property type="match status" value="1"/>
</dbReference>
<dbReference type="PANTHER" id="PTHR10683:SF40">
    <property type="entry name" value="FRUCTOSE-6-PHOSPHATE ALDOLASE 1-RELATED"/>
    <property type="match status" value="1"/>
</dbReference>
<dbReference type="PANTHER" id="PTHR10683">
    <property type="entry name" value="TRANSALDOLASE"/>
    <property type="match status" value="1"/>
</dbReference>
<dbReference type="Pfam" id="PF00923">
    <property type="entry name" value="TAL_FSA"/>
    <property type="match status" value="1"/>
</dbReference>
<dbReference type="SUPFAM" id="SSF51569">
    <property type="entry name" value="Aldolase"/>
    <property type="match status" value="1"/>
</dbReference>
<dbReference type="PROSITE" id="PS01054">
    <property type="entry name" value="TRANSALDOLASE_1"/>
    <property type="match status" value="1"/>
</dbReference>
<dbReference type="PROSITE" id="PS00958">
    <property type="entry name" value="TRANSALDOLASE_2"/>
    <property type="match status" value="1"/>
</dbReference>
<reference key="1">
    <citation type="journal article" date="2010" name="Proc. Natl. Acad. Sci. U.S.A.">
        <title>Nitrosopumilus maritimus genome reveals unique mechanisms for nitrification and autotrophy in globally distributed marine crenarchaea.</title>
        <authorList>
            <person name="Walker C.B."/>
            <person name="de la Torre J.R."/>
            <person name="Klotz M.G."/>
            <person name="Urakawa H."/>
            <person name="Pinel N."/>
            <person name="Arp D.J."/>
            <person name="Brochier-Armanet C."/>
            <person name="Chain P.S."/>
            <person name="Chan P.P."/>
            <person name="Gollabgir A."/>
            <person name="Hemp J."/>
            <person name="Hugler M."/>
            <person name="Karr E.A."/>
            <person name="Konneke M."/>
            <person name="Shin M."/>
            <person name="Lawton T.J."/>
            <person name="Lowe T."/>
            <person name="Martens-Habbena W."/>
            <person name="Sayavedra-Soto L.A."/>
            <person name="Lang D."/>
            <person name="Sievert S.M."/>
            <person name="Rosenzweig A.C."/>
            <person name="Manning G."/>
            <person name="Stahl D.A."/>
        </authorList>
    </citation>
    <scope>NUCLEOTIDE SEQUENCE [LARGE SCALE GENOMIC DNA]</scope>
    <source>
        <strain>SCM1</strain>
    </source>
</reference>